<name>CARA_BACCR</name>
<gene>
    <name evidence="1" type="primary">carA</name>
    <name type="ordered locus">BC_3887</name>
</gene>
<sequence>MKRQLILEDGTVLIGTGFGGEIEKSGEVVFTTGMTGYQETLSDPSYCGQIVTFTYPLIGNYGINRDDFESIHPSVNGLIVNEICNHPSNFRNEISLNDYLKERNIPGLAGIDTRKLTRKIRQYGTLRGRLCNMDADVEYIVSQLKATVFTDHVKRVSTKDPYPSPGRGHRVVLVDFGMKHGILRELNKRDCDVIVVPYNTTAEEILRLSPDGIMLSNGPGDPKDVPEAIEMLKDIIGKVPLFGICLGHQLFALASGANTSKLKFGHRGLNHPVKNLATGKVAITSQNHGYAVEEESVENTDLEITHVALNDGTVEGLRHKKFPAFTVQYHPEASAGPEDANDLFEDFLTMIENFKKEGEELCQNA</sequence>
<organism>
    <name type="scientific">Bacillus cereus (strain ATCC 14579 / DSM 31 / CCUG 7414 / JCM 2152 / NBRC 15305 / NCIMB 9373 / NCTC 2599 / NRRL B-3711)</name>
    <dbReference type="NCBI Taxonomy" id="226900"/>
    <lineage>
        <taxon>Bacteria</taxon>
        <taxon>Bacillati</taxon>
        <taxon>Bacillota</taxon>
        <taxon>Bacilli</taxon>
        <taxon>Bacillales</taxon>
        <taxon>Bacillaceae</taxon>
        <taxon>Bacillus</taxon>
        <taxon>Bacillus cereus group</taxon>
    </lineage>
</organism>
<reference key="1">
    <citation type="journal article" date="2003" name="Nature">
        <title>Genome sequence of Bacillus cereus and comparative analysis with Bacillus anthracis.</title>
        <authorList>
            <person name="Ivanova N."/>
            <person name="Sorokin A."/>
            <person name="Anderson I."/>
            <person name="Galleron N."/>
            <person name="Candelon B."/>
            <person name="Kapatral V."/>
            <person name="Bhattacharyya A."/>
            <person name="Reznik G."/>
            <person name="Mikhailova N."/>
            <person name="Lapidus A."/>
            <person name="Chu L."/>
            <person name="Mazur M."/>
            <person name="Goltsman E."/>
            <person name="Larsen N."/>
            <person name="D'Souza M."/>
            <person name="Walunas T."/>
            <person name="Grechkin Y."/>
            <person name="Pusch G."/>
            <person name="Haselkorn R."/>
            <person name="Fonstein M."/>
            <person name="Ehrlich S.D."/>
            <person name="Overbeek R."/>
            <person name="Kyrpides N.C."/>
        </authorList>
    </citation>
    <scope>NUCLEOTIDE SEQUENCE [LARGE SCALE GENOMIC DNA]</scope>
    <source>
        <strain>ATCC 14579 / DSM 31 / CCUG 7414 / JCM 2152 / NBRC 15305 / NCIMB 9373 / NCTC 2599 / NRRL B-3711</strain>
    </source>
</reference>
<evidence type="ECO:0000255" key="1">
    <source>
        <dbReference type="HAMAP-Rule" id="MF_01209"/>
    </source>
</evidence>
<evidence type="ECO:0000305" key="2"/>
<comment type="function">
    <text evidence="1">Small subunit of the glutamine-dependent carbamoyl phosphate synthetase (CPSase). CPSase catalyzes the formation of carbamoyl phosphate from the ammonia moiety of glutamine, carbonate, and phosphate donated by ATP, constituting the first step of 2 biosynthetic pathways, one leading to arginine and/or urea and the other to pyrimidine nucleotides. The small subunit (glutamine amidotransferase) binds and cleaves glutamine to supply the large subunit with the substrate ammonia.</text>
</comment>
<comment type="catalytic activity">
    <reaction evidence="1">
        <text>hydrogencarbonate + L-glutamine + 2 ATP + H2O = carbamoyl phosphate + L-glutamate + 2 ADP + phosphate + 2 H(+)</text>
        <dbReference type="Rhea" id="RHEA:18633"/>
        <dbReference type="ChEBI" id="CHEBI:15377"/>
        <dbReference type="ChEBI" id="CHEBI:15378"/>
        <dbReference type="ChEBI" id="CHEBI:17544"/>
        <dbReference type="ChEBI" id="CHEBI:29985"/>
        <dbReference type="ChEBI" id="CHEBI:30616"/>
        <dbReference type="ChEBI" id="CHEBI:43474"/>
        <dbReference type="ChEBI" id="CHEBI:58228"/>
        <dbReference type="ChEBI" id="CHEBI:58359"/>
        <dbReference type="ChEBI" id="CHEBI:456216"/>
        <dbReference type="EC" id="6.3.5.5"/>
    </reaction>
</comment>
<comment type="catalytic activity">
    <molecule>Carbamoyl phosphate synthase small chain</molecule>
    <reaction evidence="1">
        <text>L-glutamine + H2O = L-glutamate + NH4(+)</text>
        <dbReference type="Rhea" id="RHEA:15889"/>
        <dbReference type="ChEBI" id="CHEBI:15377"/>
        <dbReference type="ChEBI" id="CHEBI:28938"/>
        <dbReference type="ChEBI" id="CHEBI:29985"/>
        <dbReference type="ChEBI" id="CHEBI:58359"/>
    </reaction>
</comment>
<comment type="pathway">
    <text evidence="1">Amino-acid biosynthesis; L-arginine biosynthesis; carbamoyl phosphate from bicarbonate: step 1/1.</text>
</comment>
<comment type="pathway">
    <text evidence="1">Pyrimidine metabolism; UMP biosynthesis via de novo pathway; (S)-dihydroorotate from bicarbonate: step 1/3.</text>
</comment>
<comment type="subunit">
    <text evidence="1">Composed of two chains; the small (or glutamine) chain promotes the hydrolysis of glutamine to ammonia, which is used by the large (or ammonia) chain to synthesize carbamoyl phosphate. Tetramer of heterodimers (alpha,beta)4.</text>
</comment>
<comment type="similarity">
    <text evidence="1">Belongs to the CarA family.</text>
</comment>
<comment type="sequence caution" evidence="2">
    <conflict type="erroneous initiation">
        <sequence resource="EMBL-CDS" id="AAP10808"/>
    </conflict>
</comment>
<keyword id="KW-0028">Amino-acid biosynthesis</keyword>
<keyword id="KW-0055">Arginine biosynthesis</keyword>
<keyword id="KW-0067">ATP-binding</keyword>
<keyword id="KW-0315">Glutamine amidotransferase</keyword>
<keyword id="KW-0436">Ligase</keyword>
<keyword id="KW-0547">Nucleotide-binding</keyword>
<keyword id="KW-0665">Pyrimidine biosynthesis</keyword>
<keyword id="KW-1185">Reference proteome</keyword>
<protein>
    <recommendedName>
        <fullName evidence="1">Carbamoyl phosphate synthase small chain</fullName>
        <ecNumber evidence="1">6.3.5.5</ecNumber>
    </recommendedName>
    <alternativeName>
        <fullName evidence="1">Carbamoyl phosphate synthetase glutamine chain</fullName>
    </alternativeName>
</protein>
<dbReference type="EC" id="6.3.5.5" evidence="1"/>
<dbReference type="EMBL" id="AE016877">
    <property type="protein sequence ID" value="AAP10808.1"/>
    <property type="status" value="ALT_INIT"/>
    <property type="molecule type" value="Genomic_DNA"/>
</dbReference>
<dbReference type="RefSeq" id="NP_833607.1">
    <property type="nucleotide sequence ID" value="NC_004722.1"/>
</dbReference>
<dbReference type="RefSeq" id="WP_000828686.1">
    <property type="nucleotide sequence ID" value="NC_004722.1"/>
</dbReference>
<dbReference type="SMR" id="Q819S2"/>
<dbReference type="STRING" id="226900.BC_3887"/>
<dbReference type="MetOSite" id="Q819S2"/>
<dbReference type="KEGG" id="bce:BC3887"/>
<dbReference type="PATRIC" id="fig|226900.8.peg.4009"/>
<dbReference type="HOGENOM" id="CLU_035901_2_1_9"/>
<dbReference type="OrthoDB" id="9804328at2"/>
<dbReference type="UniPathway" id="UPA00068">
    <property type="reaction ID" value="UER00171"/>
</dbReference>
<dbReference type="UniPathway" id="UPA00070">
    <property type="reaction ID" value="UER00115"/>
</dbReference>
<dbReference type="Proteomes" id="UP000001417">
    <property type="component" value="Chromosome"/>
</dbReference>
<dbReference type="GO" id="GO:0005951">
    <property type="term" value="C:carbamoyl-phosphate synthase complex"/>
    <property type="evidence" value="ECO:0000318"/>
    <property type="project" value="GO_Central"/>
</dbReference>
<dbReference type="GO" id="GO:0005737">
    <property type="term" value="C:cytoplasm"/>
    <property type="evidence" value="ECO:0000318"/>
    <property type="project" value="GO_Central"/>
</dbReference>
<dbReference type="GO" id="GO:0005524">
    <property type="term" value="F:ATP binding"/>
    <property type="evidence" value="ECO:0007669"/>
    <property type="project" value="UniProtKB-UniRule"/>
</dbReference>
<dbReference type="GO" id="GO:0004088">
    <property type="term" value="F:carbamoyl-phosphate synthase (glutamine-hydrolyzing) activity"/>
    <property type="evidence" value="ECO:0007669"/>
    <property type="project" value="UniProtKB-UniRule"/>
</dbReference>
<dbReference type="GO" id="GO:0004359">
    <property type="term" value="F:glutaminase activity"/>
    <property type="evidence" value="ECO:0007669"/>
    <property type="project" value="RHEA"/>
</dbReference>
<dbReference type="GO" id="GO:0006207">
    <property type="term" value="P:'de novo' pyrimidine nucleobase biosynthetic process"/>
    <property type="evidence" value="ECO:0007669"/>
    <property type="project" value="InterPro"/>
</dbReference>
<dbReference type="GO" id="GO:0044205">
    <property type="term" value="P:'de novo' UMP biosynthetic process"/>
    <property type="evidence" value="ECO:0007669"/>
    <property type="project" value="UniProtKB-UniRule"/>
</dbReference>
<dbReference type="GO" id="GO:0006541">
    <property type="term" value="P:glutamine metabolic process"/>
    <property type="evidence" value="ECO:0007669"/>
    <property type="project" value="InterPro"/>
</dbReference>
<dbReference type="GO" id="GO:0006526">
    <property type="term" value="P:L-arginine biosynthetic process"/>
    <property type="evidence" value="ECO:0000318"/>
    <property type="project" value="GO_Central"/>
</dbReference>
<dbReference type="CDD" id="cd01744">
    <property type="entry name" value="GATase1_CPSase"/>
    <property type="match status" value="1"/>
</dbReference>
<dbReference type="FunFam" id="3.40.50.880:FF:000029">
    <property type="entry name" value="Carbamoyl-phosphate synthase small chain"/>
    <property type="match status" value="1"/>
</dbReference>
<dbReference type="FunFam" id="3.50.30.20:FF:000001">
    <property type="entry name" value="Carbamoyl-phosphate synthase small chain"/>
    <property type="match status" value="1"/>
</dbReference>
<dbReference type="Gene3D" id="3.40.50.880">
    <property type="match status" value="1"/>
</dbReference>
<dbReference type="Gene3D" id="3.50.30.20">
    <property type="entry name" value="Carbamoyl-phosphate synthase small subunit, N-terminal domain"/>
    <property type="match status" value="1"/>
</dbReference>
<dbReference type="HAMAP" id="MF_01209">
    <property type="entry name" value="CPSase_S_chain"/>
    <property type="match status" value="1"/>
</dbReference>
<dbReference type="InterPro" id="IPR050472">
    <property type="entry name" value="Anth_synth/Amidotransfase"/>
</dbReference>
<dbReference type="InterPro" id="IPR006274">
    <property type="entry name" value="CarbamoylP_synth_ssu"/>
</dbReference>
<dbReference type="InterPro" id="IPR002474">
    <property type="entry name" value="CarbamoylP_synth_ssu_N"/>
</dbReference>
<dbReference type="InterPro" id="IPR036480">
    <property type="entry name" value="CarbP_synth_ssu_N_sf"/>
</dbReference>
<dbReference type="InterPro" id="IPR029062">
    <property type="entry name" value="Class_I_gatase-like"/>
</dbReference>
<dbReference type="InterPro" id="IPR035686">
    <property type="entry name" value="CPSase_GATase1"/>
</dbReference>
<dbReference type="InterPro" id="IPR017926">
    <property type="entry name" value="GATASE"/>
</dbReference>
<dbReference type="NCBIfam" id="TIGR01368">
    <property type="entry name" value="CPSaseIIsmall"/>
    <property type="match status" value="1"/>
</dbReference>
<dbReference type="NCBIfam" id="NF009475">
    <property type="entry name" value="PRK12838.1"/>
    <property type="match status" value="1"/>
</dbReference>
<dbReference type="PANTHER" id="PTHR43418:SF7">
    <property type="entry name" value="CARBAMOYL-PHOSPHATE SYNTHASE SMALL CHAIN"/>
    <property type="match status" value="1"/>
</dbReference>
<dbReference type="PANTHER" id="PTHR43418">
    <property type="entry name" value="MULTIFUNCTIONAL TRYPTOPHAN BIOSYNTHESIS PROTEIN-RELATED"/>
    <property type="match status" value="1"/>
</dbReference>
<dbReference type="Pfam" id="PF00988">
    <property type="entry name" value="CPSase_sm_chain"/>
    <property type="match status" value="1"/>
</dbReference>
<dbReference type="Pfam" id="PF00117">
    <property type="entry name" value="GATase"/>
    <property type="match status" value="1"/>
</dbReference>
<dbReference type="PRINTS" id="PR00097">
    <property type="entry name" value="ANTSNTHASEII"/>
</dbReference>
<dbReference type="PRINTS" id="PR00099">
    <property type="entry name" value="CPSGATASE"/>
</dbReference>
<dbReference type="PRINTS" id="PR00096">
    <property type="entry name" value="GATASE"/>
</dbReference>
<dbReference type="SMART" id="SM01097">
    <property type="entry name" value="CPSase_sm_chain"/>
    <property type="match status" value="1"/>
</dbReference>
<dbReference type="SUPFAM" id="SSF52021">
    <property type="entry name" value="Carbamoyl phosphate synthetase, small subunit N-terminal domain"/>
    <property type="match status" value="1"/>
</dbReference>
<dbReference type="SUPFAM" id="SSF52317">
    <property type="entry name" value="Class I glutamine amidotransferase-like"/>
    <property type="match status" value="1"/>
</dbReference>
<dbReference type="PROSITE" id="PS51273">
    <property type="entry name" value="GATASE_TYPE_1"/>
    <property type="match status" value="1"/>
</dbReference>
<accession>Q819S2</accession>
<feature type="chain" id="PRO_0000112249" description="Carbamoyl phosphate synthase small chain">
    <location>
        <begin position="1"/>
        <end position="365"/>
    </location>
</feature>
<feature type="domain" description="Glutamine amidotransferase type-1" evidence="1">
    <location>
        <begin position="170"/>
        <end position="357"/>
    </location>
</feature>
<feature type="region of interest" description="CPSase" evidence="1">
    <location>
        <begin position="1"/>
        <end position="169"/>
    </location>
</feature>
<feature type="region of interest" description="CPSase">
    <location>
        <begin position="1"/>
        <end position="166"/>
    </location>
</feature>
<feature type="active site" description="Nucleophile" evidence="1">
    <location>
        <position position="245"/>
    </location>
</feature>
<feature type="active site" evidence="1">
    <location>
        <position position="330"/>
    </location>
</feature>
<feature type="active site" evidence="1">
    <location>
        <position position="332"/>
    </location>
</feature>
<feature type="binding site" evidence="1">
    <location>
        <position position="45"/>
    </location>
    <ligand>
        <name>L-glutamine</name>
        <dbReference type="ChEBI" id="CHEBI:58359"/>
    </ligand>
</feature>
<feature type="binding site" evidence="1">
    <location>
        <position position="218"/>
    </location>
    <ligand>
        <name>L-glutamine</name>
        <dbReference type="ChEBI" id="CHEBI:58359"/>
    </ligand>
</feature>
<feature type="binding site" evidence="1">
    <location>
        <position position="220"/>
    </location>
    <ligand>
        <name>L-glutamine</name>
        <dbReference type="ChEBI" id="CHEBI:58359"/>
    </ligand>
</feature>
<feature type="binding site" evidence="1">
    <location>
        <position position="246"/>
    </location>
    <ligand>
        <name>L-glutamine</name>
        <dbReference type="ChEBI" id="CHEBI:58359"/>
    </ligand>
</feature>
<feature type="binding site" evidence="1">
    <location>
        <position position="249"/>
    </location>
    <ligand>
        <name>L-glutamine</name>
        <dbReference type="ChEBI" id="CHEBI:58359"/>
    </ligand>
</feature>
<feature type="binding site" evidence="1">
    <location>
        <position position="287"/>
    </location>
    <ligand>
        <name>L-glutamine</name>
        <dbReference type="ChEBI" id="CHEBI:58359"/>
    </ligand>
</feature>
<feature type="binding site" evidence="1">
    <location>
        <position position="289"/>
    </location>
    <ligand>
        <name>L-glutamine</name>
        <dbReference type="ChEBI" id="CHEBI:58359"/>
    </ligand>
</feature>
<feature type="binding site" evidence="1">
    <location>
        <position position="290"/>
    </location>
    <ligand>
        <name>L-glutamine</name>
        <dbReference type="ChEBI" id="CHEBI:58359"/>
    </ligand>
</feature>
<proteinExistence type="inferred from homology"/>